<protein>
    <recommendedName>
        <fullName evidence="1">O-acetyl-ADP-ribose deacetylase</fullName>
        <ecNumber evidence="1">3.1.1.106</ecNumber>
    </recommendedName>
    <alternativeName>
        <fullName evidence="1">Regulator of RNase III activity</fullName>
    </alternativeName>
</protein>
<evidence type="ECO:0000255" key="1">
    <source>
        <dbReference type="HAMAP-Rule" id="MF_01205"/>
    </source>
</evidence>
<keyword id="KW-0378">Hydrolase</keyword>
<gene>
    <name evidence="1" type="primary">ymdB</name>
    <name type="ordered locus">SFV_1057</name>
</gene>
<accession>Q0T5Z6</accession>
<dbReference type="EC" id="3.1.1.106" evidence="1"/>
<dbReference type="EMBL" id="CP000266">
    <property type="protein sequence ID" value="ABF03269.1"/>
    <property type="molecule type" value="Genomic_DNA"/>
</dbReference>
<dbReference type="RefSeq" id="WP_000857408.1">
    <property type="nucleotide sequence ID" value="NC_008258.1"/>
</dbReference>
<dbReference type="SMR" id="Q0T5Z6"/>
<dbReference type="KEGG" id="sfv:SFV_1057"/>
<dbReference type="HOGENOM" id="CLU_046550_5_1_6"/>
<dbReference type="Proteomes" id="UP000000659">
    <property type="component" value="Chromosome"/>
</dbReference>
<dbReference type="GO" id="GO:0061463">
    <property type="term" value="F:O-acetyl-ADP-ribose deacetylase activity"/>
    <property type="evidence" value="ECO:0007669"/>
    <property type="project" value="UniProtKB-EC"/>
</dbReference>
<dbReference type="GO" id="GO:0001883">
    <property type="term" value="F:purine nucleoside binding"/>
    <property type="evidence" value="ECO:0007669"/>
    <property type="project" value="UniProtKB-UniRule"/>
</dbReference>
<dbReference type="GO" id="GO:0008428">
    <property type="term" value="F:ribonuclease inhibitor activity"/>
    <property type="evidence" value="ECO:0007669"/>
    <property type="project" value="UniProtKB-UniRule"/>
</dbReference>
<dbReference type="GO" id="GO:0042278">
    <property type="term" value="P:purine nucleoside metabolic process"/>
    <property type="evidence" value="ECO:0007669"/>
    <property type="project" value="UniProtKB-UniRule"/>
</dbReference>
<dbReference type="CDD" id="cd02908">
    <property type="entry name" value="Macro_OAADPr_deacetylase"/>
    <property type="match status" value="1"/>
</dbReference>
<dbReference type="FunFam" id="3.40.220.10:FF:000003">
    <property type="entry name" value="O-acetyl-ADP-ribose deacetylase MACROD2"/>
    <property type="match status" value="1"/>
</dbReference>
<dbReference type="Gene3D" id="3.40.220.10">
    <property type="entry name" value="Leucine Aminopeptidase, subunit E, domain 1"/>
    <property type="match status" value="1"/>
</dbReference>
<dbReference type="HAMAP" id="MF_01205">
    <property type="entry name" value="YmdB"/>
    <property type="match status" value="1"/>
</dbReference>
<dbReference type="InterPro" id="IPR002589">
    <property type="entry name" value="Macro_dom"/>
</dbReference>
<dbReference type="InterPro" id="IPR043472">
    <property type="entry name" value="Macro_dom-like"/>
</dbReference>
<dbReference type="InterPro" id="IPR024900">
    <property type="entry name" value="O-Ac-ADP-ribose_deAcase"/>
</dbReference>
<dbReference type="NCBIfam" id="NF001660">
    <property type="entry name" value="PRK00431.1-1"/>
    <property type="match status" value="1"/>
</dbReference>
<dbReference type="NCBIfam" id="NF001664">
    <property type="entry name" value="PRK00431.1-6"/>
    <property type="match status" value="1"/>
</dbReference>
<dbReference type="PANTHER" id="PTHR11106">
    <property type="entry name" value="GANGLIOSIDE INDUCED DIFFERENTIATION ASSOCIATED PROTEIN 2-RELATED"/>
    <property type="match status" value="1"/>
</dbReference>
<dbReference type="PANTHER" id="PTHR11106:SF27">
    <property type="entry name" value="MACRO DOMAIN-CONTAINING PROTEIN"/>
    <property type="match status" value="1"/>
</dbReference>
<dbReference type="Pfam" id="PF01661">
    <property type="entry name" value="Macro"/>
    <property type="match status" value="1"/>
</dbReference>
<dbReference type="SMART" id="SM00506">
    <property type="entry name" value="A1pp"/>
    <property type="match status" value="1"/>
</dbReference>
<dbReference type="SUPFAM" id="SSF52949">
    <property type="entry name" value="Macro domain-like"/>
    <property type="match status" value="1"/>
</dbReference>
<dbReference type="PROSITE" id="PS51154">
    <property type="entry name" value="MACRO"/>
    <property type="match status" value="1"/>
</dbReference>
<reference key="1">
    <citation type="journal article" date="2006" name="BMC Genomics">
        <title>Complete genome sequence of Shigella flexneri 5b and comparison with Shigella flexneri 2a.</title>
        <authorList>
            <person name="Nie H."/>
            <person name="Yang F."/>
            <person name="Zhang X."/>
            <person name="Yang J."/>
            <person name="Chen L."/>
            <person name="Wang J."/>
            <person name="Xiong Z."/>
            <person name="Peng J."/>
            <person name="Sun L."/>
            <person name="Dong J."/>
            <person name="Xue Y."/>
            <person name="Xu X."/>
            <person name="Chen S."/>
            <person name="Yao Z."/>
            <person name="Shen Y."/>
            <person name="Jin Q."/>
        </authorList>
    </citation>
    <scope>NUCLEOTIDE SEQUENCE [LARGE SCALE GENOMIC DNA]</scope>
    <source>
        <strain>8401</strain>
    </source>
</reference>
<feature type="chain" id="PRO_0000409487" description="O-acetyl-ADP-ribose deacetylase">
    <location>
        <begin position="1"/>
        <end position="177"/>
    </location>
</feature>
<feature type="domain" description="Macro" evidence="1">
    <location>
        <begin position="1"/>
        <end position="175"/>
    </location>
</feature>
<feature type="active site" description="Proton acceptor" evidence="1">
    <location>
        <position position="35"/>
    </location>
</feature>
<feature type="binding site" evidence="1">
    <location>
        <begin position="11"/>
        <end position="12"/>
    </location>
    <ligand>
        <name>substrate</name>
    </ligand>
</feature>
<feature type="binding site" evidence="1">
    <location>
        <position position="25"/>
    </location>
    <ligand>
        <name>substrate</name>
    </ligand>
</feature>
<feature type="binding site" evidence="1">
    <location>
        <begin position="33"/>
        <end position="35"/>
    </location>
    <ligand>
        <name>substrate</name>
    </ligand>
</feature>
<feature type="binding site" evidence="1">
    <location>
        <begin position="122"/>
        <end position="126"/>
    </location>
    <ligand>
        <name>substrate</name>
    </ligand>
</feature>
<comment type="function">
    <text evidence="1">Deacetylates O-acetyl-ADP ribose to yield ADP-ribose and free acetate. Down-regulates ribonuclease 3 (RNase III) activity. Acts by interacting directly with the region of the ribonuclease that is required for dimerization/activation.</text>
</comment>
<comment type="catalytic activity">
    <reaction evidence="1">
        <text>3''-O-acetyl-ADP-D-ribose + H2O = ADP-D-ribose + acetate + H(+)</text>
        <dbReference type="Rhea" id="RHEA:59244"/>
        <dbReference type="ChEBI" id="CHEBI:15377"/>
        <dbReference type="ChEBI" id="CHEBI:15378"/>
        <dbReference type="ChEBI" id="CHEBI:30089"/>
        <dbReference type="ChEBI" id="CHEBI:57967"/>
        <dbReference type="ChEBI" id="CHEBI:142723"/>
        <dbReference type="EC" id="3.1.1.106"/>
    </reaction>
</comment>
<comment type="catalytic activity">
    <reaction evidence="1">
        <text>2''-O-acetyl-ADP-D-ribose + H2O = ADP-D-ribose + acetate + H(+)</text>
        <dbReference type="Rhea" id="RHEA:57060"/>
        <dbReference type="ChEBI" id="CHEBI:15377"/>
        <dbReference type="ChEBI" id="CHEBI:15378"/>
        <dbReference type="ChEBI" id="CHEBI:30089"/>
        <dbReference type="ChEBI" id="CHEBI:57967"/>
        <dbReference type="ChEBI" id="CHEBI:83767"/>
        <dbReference type="EC" id="3.1.1.106"/>
    </reaction>
</comment>
<comment type="subunit">
    <text evidence="1">Homodimer. Interacts with RNase III.</text>
</comment>
<comment type="similarity">
    <text evidence="1">Belongs to the MacroD-type family. YmdB subfamily.</text>
</comment>
<name>YMDB_SHIF8</name>
<organism>
    <name type="scientific">Shigella flexneri serotype 5b (strain 8401)</name>
    <dbReference type="NCBI Taxonomy" id="373384"/>
    <lineage>
        <taxon>Bacteria</taxon>
        <taxon>Pseudomonadati</taxon>
        <taxon>Pseudomonadota</taxon>
        <taxon>Gammaproteobacteria</taxon>
        <taxon>Enterobacterales</taxon>
        <taxon>Enterobacteriaceae</taxon>
        <taxon>Shigella</taxon>
    </lineage>
</organism>
<proteinExistence type="inferred from homology"/>
<sequence length="177" mass="18910">MKTRIHVVQGDITKLAVDVIVNAANPSLMGGGGVDGAIHRAAGPALLDACLKVRQQQGDCPTGHAVITLAGDLPAKAVVHTVGPVWRGGEQNEDQLLQDAYLNSLRLVAANSYTSVAFPAISTGVYSYPRAAAAEIAVKTVSEFITRHALPEQVYFVCYDEENAHLYERLLTQQGDE</sequence>